<sequence>MSNVTPMMQQYLKIKSEYQDCLLFFRLGDFYEMFYEDAKEASRVLEITLTKRDAKKENPIPMCGVPYHSADSYIDTLVNNGYKVAICEQMEDPKQTKGMVRREVVRIVTPGTVMEQGGVDDKQNNYILSFVMNQPEIALSYCDVSTGELKVTHFNDEATLLNEITTINPNEVVINDNISDNLKRQINMVTETITVRETLSSEIYSVNQTEHKLMYQATQLLLDYIHHTQKRDLSHIEDVVQYAAIDYMKMDFYAKRNLELTESIRLKSKKGTLLWLMDETKTPMGARRLKQWIDRPLISKEQIEARLDIVDEFSAHFIERDTLRTYLNQVYDIERLVGRVSYGNVNARDLIQLKHSISEIPNIKALLNSMNQNTLVQVNQLEPLDDLLDILEQSLVEEPPISVKDGGLFKVGFNTQLDEYLEASKNGKTWLAELQAKERQRTGIKSLKISFNKVFGYFIEITRANLQNFEPSEFGYMRKQTLSNAERFITDELKEKEDIILGAEDKAIELEYQLFVQLREEVKKYTERLQQQAKIISELDCLQSFAEIAQKYNYTRPSFSENKTLELVESRHPVVERVMDYNDYVPNNCRLDNETFIYLITGPNMSGKSTYMRQVAIISIMAQMGAYVPCKEAVLPIFDQIFTRIGAADDLVSGKSTFMVEMLEAQKALTYATEDSLIIFDEIGRGTSTYDGLALAQAMIEYVAETSHAKTLFSTHYHELTTLDQALPSLKNVHVAANEYKGELIFLHKVKDGAVDDSYGIQVAKLADLPEKVISRAQVILSEFEASAGKKSSISNLKMVENEPEINQENLNLSVEETTDTLSQKDFEQASFDLFENDQESEIELQIKNLNLSNMTPIEALVKLSELQNQLK</sequence>
<gene>
    <name evidence="1" type="primary">mutS</name>
    <name type="ordered locus">SA1137</name>
</gene>
<name>MUTS_STAAN</name>
<organism>
    <name type="scientific">Staphylococcus aureus (strain N315)</name>
    <dbReference type="NCBI Taxonomy" id="158879"/>
    <lineage>
        <taxon>Bacteria</taxon>
        <taxon>Bacillati</taxon>
        <taxon>Bacillota</taxon>
        <taxon>Bacilli</taxon>
        <taxon>Bacillales</taxon>
        <taxon>Staphylococcaceae</taxon>
        <taxon>Staphylococcus</taxon>
    </lineage>
</organism>
<feature type="chain" id="PRO_0000115136" description="DNA mismatch repair protein MutS">
    <location>
        <begin position="1"/>
        <end position="872"/>
    </location>
</feature>
<feature type="binding site" evidence="1">
    <location>
        <begin position="602"/>
        <end position="609"/>
    </location>
    <ligand>
        <name>ATP</name>
        <dbReference type="ChEBI" id="CHEBI:30616"/>
    </ligand>
</feature>
<keyword id="KW-0067">ATP-binding</keyword>
<keyword id="KW-0227">DNA damage</keyword>
<keyword id="KW-0234">DNA repair</keyword>
<keyword id="KW-0238">DNA-binding</keyword>
<keyword id="KW-0547">Nucleotide-binding</keyword>
<dbReference type="EMBL" id="BA000018">
    <property type="protein sequence ID" value="BAB42390.1"/>
    <property type="molecule type" value="Genomic_DNA"/>
</dbReference>
<dbReference type="PIR" id="B89904">
    <property type="entry name" value="B89904"/>
</dbReference>
<dbReference type="RefSeq" id="WP_000073352.1">
    <property type="nucleotide sequence ID" value="NC_002745.2"/>
</dbReference>
<dbReference type="SMR" id="P65493"/>
<dbReference type="EnsemblBacteria" id="BAB42390">
    <property type="protein sequence ID" value="BAB42390"/>
    <property type="gene ID" value="BAB42390"/>
</dbReference>
<dbReference type="KEGG" id="sau:SA1137"/>
<dbReference type="HOGENOM" id="CLU_002472_4_0_9"/>
<dbReference type="GO" id="GO:0005829">
    <property type="term" value="C:cytosol"/>
    <property type="evidence" value="ECO:0007669"/>
    <property type="project" value="TreeGrafter"/>
</dbReference>
<dbReference type="GO" id="GO:0005524">
    <property type="term" value="F:ATP binding"/>
    <property type="evidence" value="ECO:0007669"/>
    <property type="project" value="UniProtKB-UniRule"/>
</dbReference>
<dbReference type="GO" id="GO:0140664">
    <property type="term" value="F:ATP-dependent DNA damage sensor activity"/>
    <property type="evidence" value="ECO:0007669"/>
    <property type="project" value="InterPro"/>
</dbReference>
<dbReference type="GO" id="GO:0003684">
    <property type="term" value="F:damaged DNA binding"/>
    <property type="evidence" value="ECO:0007669"/>
    <property type="project" value="UniProtKB-UniRule"/>
</dbReference>
<dbReference type="GO" id="GO:0030983">
    <property type="term" value="F:mismatched DNA binding"/>
    <property type="evidence" value="ECO:0007669"/>
    <property type="project" value="InterPro"/>
</dbReference>
<dbReference type="GO" id="GO:0006298">
    <property type="term" value="P:mismatch repair"/>
    <property type="evidence" value="ECO:0007669"/>
    <property type="project" value="UniProtKB-UniRule"/>
</dbReference>
<dbReference type="CDD" id="cd03284">
    <property type="entry name" value="ABC_MutS1"/>
    <property type="match status" value="1"/>
</dbReference>
<dbReference type="FunFam" id="1.10.1420.10:FF:000007">
    <property type="entry name" value="DNA mismatch repair protein MutS"/>
    <property type="match status" value="1"/>
</dbReference>
<dbReference type="FunFam" id="3.40.1170.10:FF:000001">
    <property type="entry name" value="DNA mismatch repair protein MutS"/>
    <property type="match status" value="1"/>
</dbReference>
<dbReference type="FunFam" id="3.40.50.300:FF:000896">
    <property type="entry name" value="DNA mismatch repair protein MutS"/>
    <property type="match status" value="1"/>
</dbReference>
<dbReference type="Gene3D" id="1.10.1420.10">
    <property type="match status" value="2"/>
</dbReference>
<dbReference type="Gene3D" id="3.40.1170.10">
    <property type="entry name" value="DNA repair protein MutS, domain I"/>
    <property type="match status" value="1"/>
</dbReference>
<dbReference type="Gene3D" id="3.30.420.110">
    <property type="entry name" value="MutS, connector domain"/>
    <property type="match status" value="1"/>
</dbReference>
<dbReference type="Gene3D" id="3.40.50.300">
    <property type="entry name" value="P-loop containing nucleotide triphosphate hydrolases"/>
    <property type="match status" value="1"/>
</dbReference>
<dbReference type="HAMAP" id="MF_00096">
    <property type="entry name" value="MutS"/>
    <property type="match status" value="1"/>
</dbReference>
<dbReference type="InterPro" id="IPR005748">
    <property type="entry name" value="DNA_mismatch_repair_MutS"/>
</dbReference>
<dbReference type="InterPro" id="IPR007695">
    <property type="entry name" value="DNA_mismatch_repair_MutS-lik_N"/>
</dbReference>
<dbReference type="InterPro" id="IPR017261">
    <property type="entry name" value="DNA_mismatch_repair_MutS/MSH"/>
</dbReference>
<dbReference type="InterPro" id="IPR000432">
    <property type="entry name" value="DNA_mismatch_repair_MutS_C"/>
</dbReference>
<dbReference type="InterPro" id="IPR007861">
    <property type="entry name" value="DNA_mismatch_repair_MutS_clamp"/>
</dbReference>
<dbReference type="InterPro" id="IPR007696">
    <property type="entry name" value="DNA_mismatch_repair_MutS_core"/>
</dbReference>
<dbReference type="InterPro" id="IPR016151">
    <property type="entry name" value="DNA_mismatch_repair_MutS_N"/>
</dbReference>
<dbReference type="InterPro" id="IPR036187">
    <property type="entry name" value="DNA_mismatch_repair_MutS_sf"/>
</dbReference>
<dbReference type="InterPro" id="IPR007860">
    <property type="entry name" value="DNA_mmatch_repair_MutS_con_dom"/>
</dbReference>
<dbReference type="InterPro" id="IPR045076">
    <property type="entry name" value="MutS"/>
</dbReference>
<dbReference type="InterPro" id="IPR036678">
    <property type="entry name" value="MutS_con_dom_sf"/>
</dbReference>
<dbReference type="InterPro" id="IPR027417">
    <property type="entry name" value="P-loop_NTPase"/>
</dbReference>
<dbReference type="NCBIfam" id="TIGR01070">
    <property type="entry name" value="mutS1"/>
    <property type="match status" value="1"/>
</dbReference>
<dbReference type="NCBIfam" id="NF003810">
    <property type="entry name" value="PRK05399.1"/>
    <property type="match status" value="1"/>
</dbReference>
<dbReference type="PANTHER" id="PTHR11361:SF34">
    <property type="entry name" value="DNA MISMATCH REPAIR PROTEIN MSH1, MITOCHONDRIAL"/>
    <property type="match status" value="1"/>
</dbReference>
<dbReference type="PANTHER" id="PTHR11361">
    <property type="entry name" value="DNA MISMATCH REPAIR PROTEIN MUTS FAMILY MEMBER"/>
    <property type="match status" value="1"/>
</dbReference>
<dbReference type="Pfam" id="PF01624">
    <property type="entry name" value="MutS_I"/>
    <property type="match status" value="1"/>
</dbReference>
<dbReference type="Pfam" id="PF05188">
    <property type="entry name" value="MutS_II"/>
    <property type="match status" value="1"/>
</dbReference>
<dbReference type="Pfam" id="PF05192">
    <property type="entry name" value="MutS_III"/>
    <property type="match status" value="1"/>
</dbReference>
<dbReference type="Pfam" id="PF05190">
    <property type="entry name" value="MutS_IV"/>
    <property type="match status" value="1"/>
</dbReference>
<dbReference type="Pfam" id="PF00488">
    <property type="entry name" value="MutS_V"/>
    <property type="match status" value="1"/>
</dbReference>
<dbReference type="PIRSF" id="PIRSF037677">
    <property type="entry name" value="DNA_mis_repair_Msh6"/>
    <property type="match status" value="1"/>
</dbReference>
<dbReference type="SMART" id="SM00534">
    <property type="entry name" value="MUTSac"/>
    <property type="match status" value="1"/>
</dbReference>
<dbReference type="SMART" id="SM00533">
    <property type="entry name" value="MUTSd"/>
    <property type="match status" value="1"/>
</dbReference>
<dbReference type="SUPFAM" id="SSF55271">
    <property type="entry name" value="DNA repair protein MutS, domain I"/>
    <property type="match status" value="1"/>
</dbReference>
<dbReference type="SUPFAM" id="SSF53150">
    <property type="entry name" value="DNA repair protein MutS, domain II"/>
    <property type="match status" value="1"/>
</dbReference>
<dbReference type="SUPFAM" id="SSF48334">
    <property type="entry name" value="DNA repair protein MutS, domain III"/>
    <property type="match status" value="1"/>
</dbReference>
<dbReference type="SUPFAM" id="SSF52540">
    <property type="entry name" value="P-loop containing nucleoside triphosphate hydrolases"/>
    <property type="match status" value="1"/>
</dbReference>
<dbReference type="PROSITE" id="PS00486">
    <property type="entry name" value="DNA_MISMATCH_REPAIR_2"/>
    <property type="match status" value="1"/>
</dbReference>
<reference key="1">
    <citation type="journal article" date="2001" name="Lancet">
        <title>Whole genome sequencing of meticillin-resistant Staphylococcus aureus.</title>
        <authorList>
            <person name="Kuroda M."/>
            <person name="Ohta T."/>
            <person name="Uchiyama I."/>
            <person name="Baba T."/>
            <person name="Yuzawa H."/>
            <person name="Kobayashi I."/>
            <person name="Cui L."/>
            <person name="Oguchi A."/>
            <person name="Aoki K."/>
            <person name="Nagai Y."/>
            <person name="Lian J.-Q."/>
            <person name="Ito T."/>
            <person name="Kanamori M."/>
            <person name="Matsumaru H."/>
            <person name="Maruyama A."/>
            <person name="Murakami H."/>
            <person name="Hosoyama A."/>
            <person name="Mizutani-Ui Y."/>
            <person name="Takahashi N.K."/>
            <person name="Sawano T."/>
            <person name="Inoue R."/>
            <person name="Kaito C."/>
            <person name="Sekimizu K."/>
            <person name="Hirakawa H."/>
            <person name="Kuhara S."/>
            <person name="Goto S."/>
            <person name="Yabuzaki J."/>
            <person name="Kanehisa M."/>
            <person name="Yamashita A."/>
            <person name="Oshima K."/>
            <person name="Furuya K."/>
            <person name="Yoshino C."/>
            <person name="Shiba T."/>
            <person name="Hattori M."/>
            <person name="Ogasawara N."/>
            <person name="Hayashi H."/>
            <person name="Hiramatsu K."/>
        </authorList>
    </citation>
    <scope>NUCLEOTIDE SEQUENCE [LARGE SCALE GENOMIC DNA]</scope>
    <source>
        <strain>N315</strain>
    </source>
</reference>
<protein>
    <recommendedName>
        <fullName evidence="1">DNA mismatch repair protein MutS</fullName>
    </recommendedName>
</protein>
<comment type="function">
    <text evidence="1">This protein is involved in the repair of mismatches in DNA. It is possible that it carries out the mismatch recognition step. This protein has a weak ATPase activity.</text>
</comment>
<comment type="similarity">
    <text evidence="1">Belongs to the DNA mismatch repair MutS family.</text>
</comment>
<evidence type="ECO:0000255" key="1">
    <source>
        <dbReference type="HAMAP-Rule" id="MF_00096"/>
    </source>
</evidence>
<proteinExistence type="inferred from homology"/>
<accession>P65493</accession>
<accession>Q99UH8</accession>